<keyword id="KW-0964">Secreted</keyword>
<keyword id="KW-0732">Signal</keyword>
<protein>
    <recommendedName>
        <fullName>Anionic peptide NDBP7</fullName>
    </recommendedName>
</protein>
<organism>
    <name type="scientific">Lychas mucronatus</name>
    <name type="common">Chinese swimming scorpion</name>
    <dbReference type="NCBI Taxonomy" id="172552"/>
    <lineage>
        <taxon>Eukaryota</taxon>
        <taxon>Metazoa</taxon>
        <taxon>Ecdysozoa</taxon>
        <taxon>Arthropoda</taxon>
        <taxon>Chelicerata</taxon>
        <taxon>Arachnida</taxon>
        <taxon>Scorpiones</taxon>
        <taxon>Buthida</taxon>
        <taxon>Buthoidea</taxon>
        <taxon>Buthidae</taxon>
        <taxon>Lychas</taxon>
    </lineage>
</organism>
<name>NDBN_LYCMC</name>
<reference key="1">
    <citation type="journal article" date="2010" name="BMC Genomics">
        <title>Comparative venom gland transcriptome analysis of the scorpion Lychas mucronatus reveals intraspecific toxic gene diversity and new venomous components.</title>
        <authorList>
            <person name="Zhao R."/>
            <person name="Ma Y."/>
            <person name="He Y."/>
            <person name="Di Z."/>
            <person name="Wu Y.-L."/>
            <person name="Cao Z.-J."/>
            <person name="Li W.-X."/>
        </authorList>
    </citation>
    <scope>NUCLEOTIDE SEQUENCE [MRNA]</scope>
    <source>
        <strain>Hainan</strain>
        <tissue>Venom gland</tissue>
    </source>
</reference>
<dbReference type="EMBL" id="EU163890">
    <property type="protein sequence ID" value="ABY26699.1"/>
    <property type="molecule type" value="mRNA"/>
</dbReference>
<dbReference type="GO" id="GO:0005576">
    <property type="term" value="C:extracellular region"/>
    <property type="evidence" value="ECO:0007669"/>
    <property type="project" value="UniProtKB-SubCell"/>
</dbReference>
<proteinExistence type="evidence at transcript level"/>
<feature type="signal peptide" evidence="2">
    <location>
        <begin position="1"/>
        <end position="20"/>
    </location>
</feature>
<feature type="chain" id="PRO_0000403878" description="Anionic peptide NDBP7">
    <location>
        <begin position="21"/>
        <end position="63"/>
    </location>
</feature>
<evidence type="ECO:0000250" key="1"/>
<evidence type="ECO:0000255" key="2"/>
<evidence type="ECO:0000305" key="3"/>
<comment type="subcellular location">
    <subcellularLocation>
        <location evidence="1">Secreted</location>
    </subcellularLocation>
</comment>
<comment type="tissue specificity">
    <text>Expressed by the venom gland.</text>
</comment>
<comment type="similarity">
    <text evidence="3">Belongs to the non-disulfide-bridged peptide (NDBP) superfamily. Long chain multifunctional peptide (group 2) family.</text>
</comment>
<sequence length="63" mass="7505">MISRFCLLFLLVFVVSKIQAAEDFNEENEVDDLDDLDFLDDLDLDLSPEELEYLENWVKEFED</sequence>
<accession>D9U2B6</accession>